<name>PCNA_CATRO</name>
<feature type="chain" id="PRO_0000149180" description="Proliferating cell nuclear antigen">
    <location>
        <begin position="1"/>
        <end position="268"/>
    </location>
</feature>
<feature type="DNA-binding region" evidence="1">
    <location>
        <begin position="61"/>
        <end position="80"/>
    </location>
</feature>
<dbReference type="EMBL" id="X55052">
    <property type="protein sequence ID" value="CAA38893.1"/>
    <property type="molecule type" value="mRNA"/>
</dbReference>
<dbReference type="PIR" id="S15434">
    <property type="entry name" value="S15434"/>
</dbReference>
<dbReference type="SMR" id="P24314"/>
<dbReference type="GO" id="GO:0043626">
    <property type="term" value="C:PCNA complex"/>
    <property type="evidence" value="ECO:0007669"/>
    <property type="project" value="TreeGrafter"/>
</dbReference>
<dbReference type="GO" id="GO:0003677">
    <property type="term" value="F:DNA binding"/>
    <property type="evidence" value="ECO:0007669"/>
    <property type="project" value="UniProtKB-KW"/>
</dbReference>
<dbReference type="GO" id="GO:0030337">
    <property type="term" value="F:DNA polymerase processivity factor activity"/>
    <property type="evidence" value="ECO:0007669"/>
    <property type="project" value="InterPro"/>
</dbReference>
<dbReference type="GO" id="GO:0006272">
    <property type="term" value="P:leading strand elongation"/>
    <property type="evidence" value="ECO:0007669"/>
    <property type="project" value="TreeGrafter"/>
</dbReference>
<dbReference type="GO" id="GO:0006298">
    <property type="term" value="P:mismatch repair"/>
    <property type="evidence" value="ECO:0007669"/>
    <property type="project" value="TreeGrafter"/>
</dbReference>
<dbReference type="GO" id="GO:0006275">
    <property type="term" value="P:regulation of DNA replication"/>
    <property type="evidence" value="ECO:0007669"/>
    <property type="project" value="InterPro"/>
</dbReference>
<dbReference type="GO" id="GO:0019985">
    <property type="term" value="P:translesion synthesis"/>
    <property type="evidence" value="ECO:0007669"/>
    <property type="project" value="TreeGrafter"/>
</dbReference>
<dbReference type="CDD" id="cd00577">
    <property type="entry name" value="PCNA"/>
    <property type="match status" value="1"/>
</dbReference>
<dbReference type="FunFam" id="3.10.150.10:FF:000006">
    <property type="entry name" value="Proliferating cell nuclear antigen"/>
    <property type="match status" value="1"/>
</dbReference>
<dbReference type="FunFam" id="3.10.150.10:FF:000008">
    <property type="entry name" value="Proliferating cell nuclear antigen"/>
    <property type="match status" value="1"/>
</dbReference>
<dbReference type="FunFam" id="3.70.10.10:FF:000001">
    <property type="entry name" value="Proliferating cell nuclear antigen"/>
    <property type="match status" value="1"/>
</dbReference>
<dbReference type="Gene3D" id="3.70.10.10">
    <property type="match status" value="1"/>
</dbReference>
<dbReference type="HAMAP" id="MF_00317">
    <property type="entry name" value="DNApol_clamp_arch"/>
    <property type="match status" value="1"/>
</dbReference>
<dbReference type="InterPro" id="IPR046938">
    <property type="entry name" value="DNA_clamp_sf"/>
</dbReference>
<dbReference type="InterPro" id="IPR000730">
    <property type="entry name" value="Pr_cel_nuc_antig"/>
</dbReference>
<dbReference type="InterPro" id="IPR022649">
    <property type="entry name" value="Pr_cel_nuc_antig_C"/>
</dbReference>
<dbReference type="InterPro" id="IPR022659">
    <property type="entry name" value="Pr_cel_nuc_antig_CS"/>
</dbReference>
<dbReference type="InterPro" id="IPR022648">
    <property type="entry name" value="Pr_cel_nuc_antig_N"/>
</dbReference>
<dbReference type="NCBIfam" id="TIGR00590">
    <property type="entry name" value="pcna"/>
    <property type="match status" value="1"/>
</dbReference>
<dbReference type="PANTHER" id="PTHR11352">
    <property type="entry name" value="PROLIFERATING CELL NUCLEAR ANTIGEN"/>
    <property type="match status" value="1"/>
</dbReference>
<dbReference type="PANTHER" id="PTHR11352:SF0">
    <property type="entry name" value="PROLIFERATING CELL NUCLEAR ANTIGEN"/>
    <property type="match status" value="1"/>
</dbReference>
<dbReference type="Pfam" id="PF02747">
    <property type="entry name" value="PCNA_C"/>
    <property type="match status" value="1"/>
</dbReference>
<dbReference type="Pfam" id="PF00705">
    <property type="entry name" value="PCNA_N"/>
    <property type="match status" value="1"/>
</dbReference>
<dbReference type="PRINTS" id="PR00339">
    <property type="entry name" value="PCNACYCLIN"/>
</dbReference>
<dbReference type="SUPFAM" id="SSF55979">
    <property type="entry name" value="DNA clamp"/>
    <property type="match status" value="2"/>
</dbReference>
<dbReference type="PROSITE" id="PS01251">
    <property type="entry name" value="PCNA_1"/>
    <property type="match status" value="1"/>
</dbReference>
<dbReference type="PROSITE" id="PS00293">
    <property type="entry name" value="PCNA_2"/>
    <property type="match status" value="1"/>
</dbReference>
<protein>
    <recommendedName>
        <fullName>Proliferating cell nuclear antigen</fullName>
        <shortName>PCNA</shortName>
    </recommendedName>
    <alternativeName>
        <fullName>Cyclin</fullName>
    </alternativeName>
</protein>
<evidence type="ECO:0000255" key="1"/>
<evidence type="ECO:0000305" key="2"/>
<comment type="function">
    <text>This protein is an auxiliary protein of DNA polymerase delta and is involved in the control of eukaryotic DNA replication by increasing the polymerase's processibility during elongation of the leading strand.</text>
</comment>
<comment type="subcellular location">
    <subcellularLocation>
        <location>Nucleus</location>
    </subcellularLocation>
</comment>
<comment type="similarity">
    <text evidence="2">Belongs to the PCNA family.</text>
</comment>
<proteinExistence type="evidence at transcript level"/>
<organism>
    <name type="scientific">Catharanthus roseus</name>
    <name type="common">Madagascar periwinkle</name>
    <name type="synonym">Vinca rosea</name>
    <dbReference type="NCBI Taxonomy" id="4058"/>
    <lineage>
        <taxon>Eukaryota</taxon>
        <taxon>Viridiplantae</taxon>
        <taxon>Streptophyta</taxon>
        <taxon>Embryophyta</taxon>
        <taxon>Tracheophyta</taxon>
        <taxon>Spermatophyta</taxon>
        <taxon>Magnoliopsida</taxon>
        <taxon>eudicotyledons</taxon>
        <taxon>Gunneridae</taxon>
        <taxon>Pentapetalae</taxon>
        <taxon>asterids</taxon>
        <taxon>lamiids</taxon>
        <taxon>Gentianales</taxon>
        <taxon>Apocynaceae</taxon>
        <taxon>Rauvolfioideae</taxon>
        <taxon>Vinceae</taxon>
        <taxon>Catharanthinae</taxon>
        <taxon>Catharanthus</taxon>
    </lineage>
</organism>
<reference key="1">
    <citation type="journal article" date="1991" name="Eur. J. Biochem.">
        <title>Molecular cloning of the gene for plant proliferating-cell nuclear antigen and expression of this gene during the cell cycle in synchronized cultures of Catharanthus roseus cells.</title>
        <authorList>
            <person name="Kodama H."/>
            <person name="Ito M."/>
            <person name="Ohnishi N."/>
            <person name="Suzuka I."/>
            <person name="Komamine A."/>
        </authorList>
    </citation>
    <scope>NUCLEOTIDE SEQUENCE [MRNA]</scope>
</reference>
<keyword id="KW-0235">DNA replication</keyword>
<keyword id="KW-0238">DNA-binding</keyword>
<keyword id="KW-0539">Nucleus</keyword>
<sequence length="268" mass="29765">MLELRLVQGSLLKKVLESLKDLVTDANFDCSASGFSLQAMDSSHVALVALLLRSEGFEHYRCDRNPSMGMNLNNMAKMLKCAGNDDIITLKADDGSDTVTFMFESPTQDKISDFEMKLMDIDSEHLGIPEAEYHAIVRMPSAEFARICKDLSSIGDTVVISVTKEGVKFSTRGDIGTANIVCRQNTTVDKPDEATIIEMNEPVSLTFALRYLNSFTKATPLSNNVTISLSSELPVVVEYKIAEMGYIRFYLAPKIEEDDEEQSLEYQA</sequence>
<accession>P24314</accession>